<sequence>MPFVDLEVPTMTTPTPAATPARPRVLTGDRPTGALHLGHLAGSLQNRVRLQDEAELFVLLADVQALTDHFDRPEQVRENVLAVALDYLAAGLDPQKTTCVVQSAVPELAELTVYFLNLVTVSHLRQNPTVKAEIAQKGYGERVPAGFFVYPVSQAADIAAFGATLVPVGDDQLPMLEQTREIVRRFNALYAPVLAEPQAQLSRVPRLPGLDGQAKMSKSLGNAIALGDSADEVARKVMGMYTDPGHLRASDPGRVEGNPVFTFLDAFDPDPARVQALKDQYRAGGLGDVKVKKHLIDVLNGVLAPIRTRRAEYERDPDAVLRFVTEGTARGREVAAQTLGQVRRAMRLFGH</sequence>
<accession>Q9RVD6</accession>
<evidence type="ECO:0000250" key="1"/>
<evidence type="ECO:0000256" key="2">
    <source>
        <dbReference type="SAM" id="MobiDB-lite"/>
    </source>
</evidence>
<evidence type="ECO:0000269" key="3">
    <source>
    </source>
</evidence>
<evidence type="ECO:0000305" key="4"/>
<evidence type="ECO:0007829" key="5">
    <source>
        <dbReference type="PDB" id="1YI8"/>
    </source>
</evidence>
<reference key="1">
    <citation type="journal article" date="1999" name="Science">
        <title>Genome sequence of the radioresistant bacterium Deinococcus radiodurans R1.</title>
        <authorList>
            <person name="White O."/>
            <person name="Eisen J.A."/>
            <person name="Heidelberg J.F."/>
            <person name="Hickey E.K."/>
            <person name="Peterson J.D."/>
            <person name="Dodson R.J."/>
            <person name="Haft D.H."/>
            <person name="Gwinn M.L."/>
            <person name="Nelson W.C."/>
            <person name="Richardson D.L."/>
            <person name="Moffat K.S."/>
            <person name="Qin H."/>
            <person name="Jiang L."/>
            <person name="Pamphile W."/>
            <person name="Crosby M."/>
            <person name="Shen M."/>
            <person name="Vamathevan J.J."/>
            <person name="Lam P."/>
            <person name="McDonald L.A."/>
            <person name="Utterback T.R."/>
            <person name="Zalewski C."/>
            <person name="Makarova K.S."/>
            <person name="Aravind L."/>
            <person name="Daly M.J."/>
            <person name="Minton K.W."/>
            <person name="Fleischmann R.D."/>
            <person name="Ketchum K.A."/>
            <person name="Nelson K.E."/>
            <person name="Salzberg S.L."/>
            <person name="Smith H.O."/>
            <person name="Venter J.C."/>
            <person name="Fraser C.M."/>
        </authorList>
    </citation>
    <scope>NUCLEOTIDE SEQUENCE [LARGE SCALE GENOMIC DNA]</scope>
    <source>
        <strain>ATCC 13939 / DSM 20539 / JCM 16871 / CCUG 27074 / LMG 4051 / NBRC 15346 / NCIMB 9279 / VKM B-1422 / R1</strain>
    </source>
</reference>
<reference key="2">
    <citation type="journal article" date="2004" name="Proc. Natl. Acad. Sci. U.S.A.">
        <title>An unusual tryptophanyl tRNA synthetase interacts with nitric oxide synthase in Deinococcus radiodurans.</title>
        <authorList>
            <person name="Buddha M.R."/>
            <person name="Keery K.M."/>
            <person name="Crane B.R."/>
        </authorList>
    </citation>
    <scope>FUNCTION</scope>
    <scope>INTERACTION WITH NOS</scope>
    <source>
        <strain>ATCC 13939 / DSM 20539 / JCM 16871 / CCUG 27074 / LMG 4051 / NBRC 15346 / NCIMB 9279 / VKM B-1422 / R1</strain>
    </source>
</reference>
<reference key="3">
    <citation type="journal article" date="2004" name="J. Biol. Chem.">
        <title>Regioselective nitration of tryptophan by a complex between bacterial nitric-oxide synthase and tryptophanyl-tRNA synthetase.</title>
        <authorList>
            <person name="Buddha M.R."/>
            <person name="Tao T."/>
            <person name="Parry R.J."/>
            <person name="Crane B.R."/>
        </authorList>
    </citation>
    <scope>ACTIVITY OF THE COMPLEX WITH NOS</scope>
    <source>
        <strain>ATCC 13939 / DSM 20539 / JCM 16871 / CCUG 27074 / LMG 4051 / NBRC 15346 / NCIMB 9279 / VKM B-1422 / R1</strain>
    </source>
</reference>
<comment type="function">
    <text evidence="3">Catalyzes the formation of 5'adenyl-Trp and tRNA(Trp) but with 5-fold less activity than TrpRS. Increases the solubility of the nitric oxide synthase oxygenase (nos), as well as its affinity for substrate L-arginine and its nitric-oxide synthase activity. The complex between trpS2 and nos catalyzes the regioselective nitration of tryptophan at the 4-position.</text>
</comment>
<comment type="catalytic activity">
    <reaction>
        <text>tRNA(Trp) + L-tryptophan + ATP = L-tryptophyl-tRNA(Trp) + AMP + diphosphate + H(+)</text>
        <dbReference type="Rhea" id="RHEA:24080"/>
        <dbReference type="Rhea" id="RHEA-COMP:9671"/>
        <dbReference type="Rhea" id="RHEA-COMP:9705"/>
        <dbReference type="ChEBI" id="CHEBI:15378"/>
        <dbReference type="ChEBI" id="CHEBI:30616"/>
        <dbReference type="ChEBI" id="CHEBI:33019"/>
        <dbReference type="ChEBI" id="CHEBI:57912"/>
        <dbReference type="ChEBI" id="CHEBI:78442"/>
        <dbReference type="ChEBI" id="CHEBI:78535"/>
        <dbReference type="ChEBI" id="CHEBI:456215"/>
        <dbReference type="EC" id="6.1.1.2"/>
    </reaction>
</comment>
<comment type="subunit">
    <text>Homodimer. Forms a complex with nos; one homodimer of trpS2 binds one homodimer of nos.</text>
</comment>
<comment type="induction">
    <text>The level of expression increases 2.2-fold, 5 hours after exposure to radiation, and returns to near a base line 5 hours later.</text>
</comment>
<comment type="miscellaneous">
    <text>This protein may not be involved in protein biosynthesis.</text>
</comment>
<comment type="similarity">
    <text evidence="4">Belongs to the class-I aminoacyl-tRNA synthetase family.</text>
</comment>
<gene>
    <name type="primary">trpS2</name>
    <name type="synonym">trpSII</name>
    <name type="ordered locus">DR_1093</name>
</gene>
<name>SYW2_DEIRA</name>
<dbReference type="EC" id="6.1.1.2"/>
<dbReference type="EMBL" id="AE000513">
    <property type="protein sequence ID" value="AAF10665.1"/>
    <property type="molecule type" value="Genomic_DNA"/>
</dbReference>
<dbReference type="PIR" id="E75438">
    <property type="entry name" value="E75438"/>
</dbReference>
<dbReference type="RefSeq" id="NP_294817.2">
    <property type="nucleotide sequence ID" value="NC_001263.1"/>
</dbReference>
<dbReference type="PDB" id="1YI8">
    <property type="method" value="X-ray"/>
    <property type="resolution" value="2.10 A"/>
    <property type="chains" value="A/B/C=1-351"/>
</dbReference>
<dbReference type="PDB" id="1YIA">
    <property type="method" value="X-ray"/>
    <property type="resolution" value="3.70 A"/>
    <property type="chains" value="A/B/C=1-351"/>
</dbReference>
<dbReference type="PDB" id="1YID">
    <property type="method" value="X-ray"/>
    <property type="resolution" value="2.40 A"/>
    <property type="chains" value="A/B/C=1-351"/>
</dbReference>
<dbReference type="PDB" id="2A4M">
    <property type="method" value="X-ray"/>
    <property type="resolution" value="2.30 A"/>
    <property type="chains" value="A/B/C=21-351"/>
</dbReference>
<dbReference type="PDBsum" id="1YI8"/>
<dbReference type="PDBsum" id="1YIA"/>
<dbReference type="PDBsum" id="1YID"/>
<dbReference type="PDBsum" id="2A4M"/>
<dbReference type="SMR" id="Q9RVD6"/>
<dbReference type="STRING" id="243230.DR_1093"/>
<dbReference type="DrugBank" id="DB02959">
    <property type="generic name" value="Oxitriptan"/>
</dbReference>
<dbReference type="PaxDb" id="243230-DR_1093"/>
<dbReference type="EnsemblBacteria" id="AAF10665">
    <property type="protein sequence ID" value="AAF10665"/>
    <property type="gene ID" value="DR_1093"/>
</dbReference>
<dbReference type="KEGG" id="dra:DR_1093"/>
<dbReference type="PATRIC" id="fig|243230.17.peg.1289"/>
<dbReference type="eggNOG" id="COG0180">
    <property type="taxonomic scope" value="Bacteria"/>
</dbReference>
<dbReference type="HOGENOM" id="CLU_029244_0_1_0"/>
<dbReference type="InParanoid" id="Q9RVD6"/>
<dbReference type="OrthoDB" id="9801042at2"/>
<dbReference type="BRENDA" id="6.1.1.2">
    <property type="organism ID" value="1856"/>
</dbReference>
<dbReference type="EvolutionaryTrace" id="Q9RVD6"/>
<dbReference type="PRO" id="PR:Q9RVD6"/>
<dbReference type="Proteomes" id="UP000002524">
    <property type="component" value="Chromosome 1"/>
</dbReference>
<dbReference type="GO" id="GO:0005737">
    <property type="term" value="C:cytoplasm"/>
    <property type="evidence" value="ECO:0000318"/>
    <property type="project" value="GO_Central"/>
</dbReference>
<dbReference type="GO" id="GO:0005524">
    <property type="term" value="F:ATP binding"/>
    <property type="evidence" value="ECO:0007669"/>
    <property type="project" value="UniProtKB-KW"/>
</dbReference>
<dbReference type="GO" id="GO:0004830">
    <property type="term" value="F:tryptophan-tRNA ligase activity"/>
    <property type="evidence" value="ECO:0000318"/>
    <property type="project" value="GO_Central"/>
</dbReference>
<dbReference type="GO" id="GO:0006436">
    <property type="term" value="P:tryptophanyl-tRNA aminoacylation"/>
    <property type="evidence" value="ECO:0000318"/>
    <property type="project" value="GO_Central"/>
</dbReference>
<dbReference type="CDD" id="cd00806">
    <property type="entry name" value="TrpRS_core"/>
    <property type="match status" value="1"/>
</dbReference>
<dbReference type="FunFam" id="1.10.240.10:FF:000005">
    <property type="entry name" value="Tryptophan--tRNA ligase"/>
    <property type="match status" value="1"/>
</dbReference>
<dbReference type="FunFam" id="3.40.50.620:FF:000094">
    <property type="entry name" value="Tryptophan--tRNA ligase"/>
    <property type="match status" value="1"/>
</dbReference>
<dbReference type="Gene3D" id="3.40.50.620">
    <property type="entry name" value="HUPs"/>
    <property type="match status" value="1"/>
</dbReference>
<dbReference type="Gene3D" id="1.10.240.10">
    <property type="entry name" value="Tyrosyl-Transfer RNA Synthetase"/>
    <property type="match status" value="1"/>
</dbReference>
<dbReference type="InterPro" id="IPR001412">
    <property type="entry name" value="aa-tRNA-synth_I_CS"/>
</dbReference>
<dbReference type="InterPro" id="IPR002305">
    <property type="entry name" value="aa-tRNA-synth_Ic"/>
</dbReference>
<dbReference type="InterPro" id="IPR014729">
    <property type="entry name" value="Rossmann-like_a/b/a_fold"/>
</dbReference>
<dbReference type="InterPro" id="IPR002306">
    <property type="entry name" value="Trp-tRNA-ligase"/>
</dbReference>
<dbReference type="InterPro" id="IPR050203">
    <property type="entry name" value="Trp-tRNA_synthetase"/>
</dbReference>
<dbReference type="NCBIfam" id="TIGR00233">
    <property type="entry name" value="trpS"/>
    <property type="match status" value="1"/>
</dbReference>
<dbReference type="PANTHER" id="PTHR43766">
    <property type="entry name" value="TRYPTOPHAN--TRNA LIGASE, MITOCHONDRIAL"/>
    <property type="match status" value="1"/>
</dbReference>
<dbReference type="PANTHER" id="PTHR43766:SF1">
    <property type="entry name" value="TRYPTOPHAN--TRNA LIGASE, MITOCHONDRIAL"/>
    <property type="match status" value="1"/>
</dbReference>
<dbReference type="Pfam" id="PF00579">
    <property type="entry name" value="tRNA-synt_1b"/>
    <property type="match status" value="1"/>
</dbReference>
<dbReference type="PRINTS" id="PR01039">
    <property type="entry name" value="TRNASYNTHTRP"/>
</dbReference>
<dbReference type="SUPFAM" id="SSF52374">
    <property type="entry name" value="Nucleotidylyl transferase"/>
    <property type="match status" value="1"/>
</dbReference>
<dbReference type="PROSITE" id="PS00178">
    <property type="entry name" value="AA_TRNA_LIGASE_I"/>
    <property type="match status" value="1"/>
</dbReference>
<organism>
    <name type="scientific">Deinococcus radiodurans (strain ATCC 13939 / DSM 20539 / JCM 16871 / CCUG 27074 / LMG 4051 / NBRC 15346 / NCIMB 9279 / VKM B-1422 / R1)</name>
    <dbReference type="NCBI Taxonomy" id="243230"/>
    <lineage>
        <taxon>Bacteria</taxon>
        <taxon>Thermotogati</taxon>
        <taxon>Deinococcota</taxon>
        <taxon>Deinococci</taxon>
        <taxon>Deinococcales</taxon>
        <taxon>Deinococcaceae</taxon>
        <taxon>Deinococcus</taxon>
    </lineage>
</organism>
<keyword id="KW-0002">3D-structure</keyword>
<keyword id="KW-0030">Aminoacyl-tRNA synthetase</keyword>
<keyword id="KW-0067">ATP-binding</keyword>
<keyword id="KW-0436">Ligase</keyword>
<keyword id="KW-0547">Nucleotide-binding</keyword>
<keyword id="KW-0648">Protein biosynthesis</keyword>
<keyword id="KW-1185">Reference proteome</keyword>
<feature type="chain" id="PRO_0000136717" description="Tryptophan--tRNA ligase 2">
    <location>
        <begin position="1"/>
        <end position="351"/>
    </location>
</feature>
<feature type="region of interest" description="Disordered" evidence="2">
    <location>
        <begin position="1"/>
        <end position="24"/>
    </location>
</feature>
<feature type="short sequence motif" description="'HIGH' region">
    <location>
        <begin position="31"/>
        <end position="39"/>
    </location>
</feature>
<feature type="short sequence motif" description="'KMSKS' region">
    <location>
        <begin position="215"/>
        <end position="219"/>
    </location>
</feature>
<feature type="compositionally biased region" description="Low complexity" evidence="2">
    <location>
        <begin position="9"/>
        <end position="24"/>
    </location>
</feature>
<feature type="binding site" evidence="1">
    <location>
        <position position="218"/>
    </location>
    <ligand>
        <name>ATP</name>
        <dbReference type="ChEBI" id="CHEBI:30616"/>
    </ligand>
</feature>
<feature type="strand" evidence="5">
    <location>
        <begin position="23"/>
        <end position="29"/>
    </location>
</feature>
<feature type="helix" evidence="5">
    <location>
        <begin position="37"/>
        <end position="42"/>
    </location>
</feature>
<feature type="helix" evidence="5">
    <location>
        <begin position="44"/>
        <end position="50"/>
    </location>
</feature>
<feature type="strand" evidence="5">
    <location>
        <begin position="52"/>
        <end position="60"/>
    </location>
</feature>
<feature type="helix" evidence="5">
    <location>
        <begin position="62"/>
        <end position="69"/>
    </location>
</feature>
<feature type="helix" evidence="5">
    <location>
        <begin position="73"/>
        <end position="89"/>
    </location>
</feature>
<feature type="turn" evidence="5">
    <location>
        <begin position="94"/>
        <end position="96"/>
    </location>
</feature>
<feature type="strand" evidence="5">
    <location>
        <begin position="97"/>
        <end position="101"/>
    </location>
</feature>
<feature type="helix" evidence="5">
    <location>
        <begin position="102"/>
        <end position="104"/>
    </location>
</feature>
<feature type="helix" evidence="5">
    <location>
        <begin position="107"/>
        <end position="116"/>
    </location>
</feature>
<feature type="helix" evidence="5">
    <location>
        <begin position="121"/>
        <end position="125"/>
    </location>
</feature>
<feature type="helix" evidence="5">
    <location>
        <begin position="128"/>
        <end position="137"/>
    </location>
</feature>
<feature type="helix" evidence="5">
    <location>
        <begin position="145"/>
        <end position="161"/>
    </location>
</feature>
<feature type="strand" evidence="5">
    <location>
        <begin position="164"/>
        <end position="168"/>
    </location>
</feature>
<feature type="helix" evidence="5">
    <location>
        <begin position="170"/>
        <end position="172"/>
    </location>
</feature>
<feature type="helix" evidence="5">
    <location>
        <begin position="173"/>
        <end position="189"/>
    </location>
</feature>
<feature type="strand" evidence="5">
    <location>
        <begin position="198"/>
        <end position="201"/>
    </location>
</feature>
<feature type="strand" evidence="5">
    <location>
        <begin position="212"/>
        <end position="214"/>
    </location>
</feature>
<feature type="turn" evidence="5">
    <location>
        <begin position="218"/>
        <end position="221"/>
    </location>
</feature>
<feature type="helix" evidence="5">
    <location>
        <begin position="230"/>
        <end position="238"/>
    </location>
</feature>
<feature type="helix" evidence="5">
    <location>
        <begin position="261"/>
        <end position="267"/>
    </location>
</feature>
<feature type="helix" evidence="5">
    <location>
        <begin position="271"/>
        <end position="283"/>
    </location>
</feature>
<feature type="helix" evidence="5">
    <location>
        <begin position="288"/>
        <end position="314"/>
    </location>
</feature>
<feature type="helix" evidence="5">
    <location>
        <begin position="317"/>
        <end position="345"/>
    </location>
</feature>
<protein>
    <recommendedName>
        <fullName>Tryptophan--tRNA ligase 2</fullName>
        <ecNumber>6.1.1.2</ecNumber>
    </recommendedName>
    <alternativeName>
        <fullName>Tryptophanyl-tRNA synthetase 2</fullName>
        <shortName>TrpRS 2</shortName>
    </alternativeName>
    <alternativeName>
        <fullName>Tryptophanyl-tRNA synthetase II</fullName>
        <shortName>TrpRS II</shortName>
    </alternativeName>
</protein>
<proteinExistence type="evidence at protein level"/>